<protein>
    <recommendedName>
        <fullName>Apolipoprotein C-II</fullName>
        <shortName>Apo-CII</shortName>
        <shortName>ApoC-II</shortName>
    </recommendedName>
    <alternativeName>
        <fullName>Apolipoprotein C2</fullName>
    </alternativeName>
    <component>
        <recommendedName>
            <fullName>Proapolipoprotein C-II</fullName>
            <shortName>ProapoC-II</shortName>
        </recommendedName>
    </component>
</protein>
<organism>
    <name type="scientific">Papio anubis</name>
    <name type="common">Olive baboon</name>
    <dbReference type="NCBI Taxonomy" id="9555"/>
    <lineage>
        <taxon>Eukaryota</taxon>
        <taxon>Metazoa</taxon>
        <taxon>Chordata</taxon>
        <taxon>Craniata</taxon>
        <taxon>Vertebrata</taxon>
        <taxon>Euteleostomi</taxon>
        <taxon>Mammalia</taxon>
        <taxon>Eutheria</taxon>
        <taxon>Euarchontoglires</taxon>
        <taxon>Primates</taxon>
        <taxon>Haplorrhini</taxon>
        <taxon>Catarrhini</taxon>
        <taxon>Cercopithecidae</taxon>
        <taxon>Cercopithecinae</taxon>
        <taxon>Papio</taxon>
    </lineage>
</organism>
<feature type="signal peptide" evidence="2">
    <location>
        <begin position="1"/>
        <end position="22"/>
    </location>
</feature>
<feature type="chain" id="PRO_0000440150" description="Proapolipoprotein C-II">
    <location>
        <begin position="23"/>
        <end position="101"/>
    </location>
</feature>
<feature type="propeptide" id="PRO_0000440151" description="Removed in mature form" evidence="1">
    <location>
        <begin position="23"/>
        <end position="28"/>
    </location>
</feature>
<feature type="chain" id="PRO_5001928893" description="Apolipoprotein C-II">
    <location>
        <begin position="29"/>
        <end position="101"/>
    </location>
</feature>
<feature type="region of interest" description="Lipid binding" evidence="1">
    <location>
        <begin position="66"/>
        <end position="74"/>
    </location>
</feature>
<feature type="region of interest" description="Lipoprotein lipase cofactor" evidence="1">
    <location>
        <begin position="78"/>
        <end position="101"/>
    </location>
</feature>
<reference key="1">
    <citation type="submission" date="2012-03" db="EMBL/GenBank/DDBJ databases">
        <title>Whole genome assembly of Papio anubis.</title>
        <authorList>
            <person name="Liu Y.L."/>
            <person name="Abraham K.A."/>
            <person name="Akbar H.A."/>
            <person name="Ali S.A."/>
            <person name="Anosike U.A."/>
            <person name="Aqrawi P.A."/>
            <person name="Arias F.A."/>
            <person name="Attaway T.A."/>
            <person name="Awwad R.A."/>
            <person name="Babu C.B."/>
            <person name="Bandaranaike D.B."/>
            <person name="Battles P.B."/>
            <person name="Bell A.B."/>
            <person name="Beltran B.B."/>
            <person name="Berhane-Mersha D.B."/>
            <person name="Bess C.B."/>
            <person name="Bickham C.B."/>
            <person name="Bolden T.B."/>
            <person name="Carter K.C."/>
            <person name="Chau D.C."/>
            <person name="Chavez A.C."/>
            <person name="Clerc-Blankenburg K.C."/>
            <person name="Coyle M.C."/>
            <person name="Dao M.D."/>
            <person name="Davila M.L.D."/>
            <person name="Davy-Carroll L.D."/>
            <person name="Denson S.D."/>
            <person name="Dinh H.D."/>
            <person name="Fernandez S.F."/>
            <person name="Fernando P.F."/>
            <person name="Forbes L.F."/>
            <person name="Francis C.F."/>
            <person name="Francisco L.F."/>
            <person name="Fu Q.F."/>
            <person name="Garcia-Iii R.G."/>
            <person name="Garrett T.G."/>
            <person name="Gross S.G."/>
            <person name="Gubbala S.G."/>
            <person name="Hirani K.H."/>
            <person name="Hogues M.H."/>
            <person name="Hollins B.H."/>
            <person name="Jackson L.J."/>
            <person name="Javaid M.J."/>
            <person name="Jhangiani S.J."/>
            <person name="Johnson A.J."/>
            <person name="Johnson B.J."/>
            <person name="Jones J.J."/>
            <person name="Joshi V.J."/>
            <person name="Kalu J.K."/>
            <person name="Khan N.K."/>
            <person name="Korchina V.K."/>
            <person name="Kovar C.K."/>
            <person name="Lago L.L."/>
            <person name="Lara F.L."/>
            <person name="Le T.-K.L."/>
            <person name="Lee S.L."/>
            <person name="Legall-Iii F.L."/>
            <person name="Lemon S.L."/>
            <person name="Liu J.L."/>
            <person name="Liu Y.-S.L."/>
            <person name="Liyanage D.L."/>
            <person name="Lopez J.L."/>
            <person name="Lorensuhewa L.L."/>
            <person name="Mata R.M."/>
            <person name="Mathew T.M."/>
            <person name="Mercado C.M."/>
            <person name="Mercado I.M."/>
            <person name="Morales K.M."/>
            <person name="Morgan M.M."/>
            <person name="Munidasa M.M."/>
            <person name="Ngo D.N."/>
            <person name="Nguyen L.N."/>
            <person name="Nguyen T.N."/>
            <person name="Nguyen N.N."/>
            <person name="Obregon M.O."/>
            <person name="Okwuonu G.O."/>
            <person name="Ongeri F.O."/>
            <person name="Onwere C.O."/>
            <person name="Osifeso I.O."/>
            <person name="Parra A.P."/>
            <person name="Patil S.P."/>
            <person name="Perez A.P."/>
            <person name="Perez Y.P."/>
            <person name="Pham C.P."/>
            <person name="Pu L.-L.P."/>
            <person name="Puazo M.P."/>
            <person name="Quiroz J.Q."/>
            <person name="Rouhana J.R."/>
            <person name="Ruiz M.R."/>
            <person name="Ruiz S.-J.R."/>
            <person name="Saada N.S."/>
            <person name="Santibanez J.S."/>
            <person name="Scheel M.S."/>
            <person name="Schneider B.S."/>
            <person name="Simmons D.S."/>
            <person name="Sisson I.S."/>
            <person name="Tang L.-Y.T."/>
            <person name="Thornton R.T."/>
            <person name="Tisius J.T."/>
            <person name="Toledanes G.T."/>
            <person name="Trejos Z.T."/>
            <person name="Usmani K.U."/>
            <person name="Varghese R.V."/>
            <person name="Vattathil S.V."/>
            <person name="Vee V.V."/>
            <person name="Walker D.W."/>
            <person name="Weissenberger G.W."/>
            <person name="White C.W."/>
            <person name="Williams A.W."/>
            <person name="Woodworth J.W."/>
            <person name="Wright R.W."/>
            <person name="Zhu Y.Z."/>
            <person name="Han Y.H."/>
            <person name="Newsham I.N."/>
            <person name="Nazareth L.N."/>
            <person name="Worley K.W."/>
            <person name="Muzny D.M."/>
            <person name="Rogers J.R."/>
            <person name="Gibbs R.G."/>
        </authorList>
    </citation>
    <scope>NUCLEOTIDE SEQUENCE [LARGE SCALE GENOMIC DNA]</scope>
</reference>
<reference key="2">
    <citation type="unpublished observations" date="2017-04">
        <authorList>
            <person name="Puppione D.L."/>
        </authorList>
    </citation>
    <scope>IDENTIFICATION</scope>
</reference>
<name>APOC2_PAPAN</name>
<proteinExistence type="inferred from homology"/>
<accession>A0A096P2H4</accession>
<gene>
    <name type="primary">APOC2</name>
</gene>
<evidence type="ECO:0000250" key="1">
    <source>
        <dbReference type="UniProtKB" id="P02655"/>
    </source>
</evidence>
<evidence type="ECO:0000255" key="2"/>
<evidence type="ECO:0000305" key="3"/>
<comment type="function">
    <text evidence="1">Component of chylomicrons, very low-density lipoproteins (VLDL), low-density lipoproteins (LDL), and high-density lipoproteins (HDL) in plasma. Plays an important role in lipoprotein metabolism as an activator of lipoprotein lipase. Both proapolipoprotein C-II and apolipoprotein C-II can activate lipoprotein lipase.</text>
</comment>
<comment type="subcellular location">
    <subcellularLocation>
        <location evidence="1">Secreted</location>
    </subcellularLocation>
</comment>
<comment type="PTM">
    <text evidence="1">Proapolipoprotein C-II is synthesized as a sialic acid containing glycoprotein which is subsequently desialylated prior to its proteolytic processing.</text>
</comment>
<comment type="PTM">
    <text evidence="1">Proapolipoprotein C-II, the major form found in plasma undergoes proteolytic cleavage of its N-terminal hexapeptide to generate apolipoprotein C-II, which occurs as the minor form in plasma.</text>
</comment>
<comment type="similarity">
    <text evidence="3">Belongs to the apolipoprotein C2 family.</text>
</comment>
<keyword id="KW-0162">Chylomicron</keyword>
<keyword id="KW-0325">Glycoprotein</keyword>
<keyword id="KW-0345">HDL</keyword>
<keyword id="KW-0427">LDL</keyword>
<keyword id="KW-0442">Lipid degradation</keyword>
<keyword id="KW-0443">Lipid metabolism</keyword>
<keyword id="KW-0445">Lipid transport</keyword>
<keyword id="KW-1185">Reference proteome</keyword>
<keyword id="KW-0964">Secreted</keyword>
<keyword id="KW-0730">Sialic acid</keyword>
<keyword id="KW-0732">Signal</keyword>
<keyword id="KW-0813">Transport</keyword>
<keyword id="KW-0850">VLDL</keyword>
<dbReference type="EMBL" id="JH682906">
    <property type="status" value="NOT_ANNOTATED_CDS"/>
    <property type="molecule type" value="Genomic_DNA"/>
</dbReference>
<dbReference type="RefSeq" id="XP_009196973.1">
    <property type="nucleotide sequence ID" value="XM_009198709.2"/>
</dbReference>
<dbReference type="SMR" id="A0A096P2H4"/>
<dbReference type="STRING" id="9555.ENSPANP00000019549"/>
<dbReference type="GeneID" id="101021046"/>
<dbReference type="KEGG" id="panu:101021046"/>
<dbReference type="CTD" id="344"/>
<dbReference type="eggNOG" id="ENOG502SEJB">
    <property type="taxonomic scope" value="Eukaryota"/>
</dbReference>
<dbReference type="HOGENOM" id="CLU_180154_0_0_1"/>
<dbReference type="OrthoDB" id="15347at314294"/>
<dbReference type="Proteomes" id="UP000028761">
    <property type="component" value="Chromosome 20"/>
</dbReference>
<dbReference type="Bgee" id="ENSPANG00000024333">
    <property type="expression patterns" value="Expressed in liver and 48 other cell types or tissues"/>
</dbReference>
<dbReference type="GO" id="GO:0042627">
    <property type="term" value="C:chylomicron"/>
    <property type="evidence" value="ECO:0007669"/>
    <property type="project" value="UniProtKB-KW"/>
</dbReference>
<dbReference type="GO" id="GO:0034364">
    <property type="term" value="C:high-density lipoprotein particle"/>
    <property type="evidence" value="ECO:0007669"/>
    <property type="project" value="UniProtKB-KW"/>
</dbReference>
<dbReference type="GO" id="GO:0034362">
    <property type="term" value="C:low-density lipoprotein particle"/>
    <property type="evidence" value="ECO:0007669"/>
    <property type="project" value="UniProtKB-KW"/>
</dbReference>
<dbReference type="GO" id="GO:0034361">
    <property type="term" value="C:very-low-density lipoprotein particle"/>
    <property type="evidence" value="ECO:0007669"/>
    <property type="project" value="UniProtKB-KW"/>
</dbReference>
<dbReference type="GO" id="GO:0016004">
    <property type="term" value="F:phospholipase activator activity"/>
    <property type="evidence" value="ECO:0007669"/>
    <property type="project" value="TreeGrafter"/>
</dbReference>
<dbReference type="GO" id="GO:0043274">
    <property type="term" value="F:phospholipase binding"/>
    <property type="evidence" value="ECO:0007669"/>
    <property type="project" value="TreeGrafter"/>
</dbReference>
<dbReference type="GO" id="GO:0016042">
    <property type="term" value="P:lipid catabolic process"/>
    <property type="evidence" value="ECO:0007669"/>
    <property type="project" value="UniProtKB-KW"/>
</dbReference>
<dbReference type="GO" id="GO:0006869">
    <property type="term" value="P:lipid transport"/>
    <property type="evidence" value="ECO:0007669"/>
    <property type="project" value="UniProtKB-KW"/>
</dbReference>
<dbReference type="GO" id="GO:0060697">
    <property type="term" value="P:positive regulation of phospholipid catabolic process"/>
    <property type="evidence" value="ECO:0007669"/>
    <property type="project" value="TreeGrafter"/>
</dbReference>
<dbReference type="FunFam" id="1.10.1440.10:FF:000001">
    <property type="entry name" value="Apolipoprotein C-II"/>
    <property type="match status" value="1"/>
</dbReference>
<dbReference type="Gene3D" id="1.10.1440.10">
    <property type="entry name" value="Apolipoprotein C-II"/>
    <property type="match status" value="1"/>
</dbReference>
<dbReference type="InterPro" id="IPR008019">
    <property type="entry name" value="Apo-CII"/>
</dbReference>
<dbReference type="InterPro" id="IPR023121">
    <property type="entry name" value="ApoC-II_dom_sf"/>
</dbReference>
<dbReference type="PANTHER" id="PTHR16566">
    <property type="entry name" value="APOLIPOPROTEIN C-II"/>
    <property type="match status" value="1"/>
</dbReference>
<dbReference type="PANTHER" id="PTHR16566:SF0">
    <property type="entry name" value="APOLIPOPROTEIN C-II"/>
    <property type="match status" value="1"/>
</dbReference>
<dbReference type="Pfam" id="PF05355">
    <property type="entry name" value="Apo-CII"/>
    <property type="match status" value="1"/>
</dbReference>
<sequence length="101" mass="11176">MGTRFLLALCLVLLVLGFEVQGAQLPQQDERPSPALLSQVQESLSSYWESAKAAAQKLYEKTYLPAVDEKLRDLYSKSTAAMSTYTGIFTDQVLSVLKGEE</sequence>